<gene>
    <name type="primary">lktA</name>
</gene>
<organism>
    <name type="scientific">Pasteurella haemolytica-like sp. (strain 5943B)</name>
    <dbReference type="NCBI Taxonomy" id="53500"/>
    <lineage>
        <taxon>Bacteria</taxon>
        <taxon>Pseudomonadati</taxon>
        <taxon>Pseudomonadota</taxon>
        <taxon>Gammaproteobacteria</taxon>
        <taxon>Pasteurellales</taxon>
        <taxon>Pasteurellaceae</taxon>
        <taxon>Mannheimia</taxon>
    </lineage>
</organism>
<comment type="function">
    <text evidence="1 3">Pasteurella leukotoxins are exotoxins that attack host leukocytes and especially polymorphonuclear cells, by causing cell rupture. The leukotoxin binds to the host LFA-1 integrin and induces a signaling cascade leading to many biological effects, including tyrosine phosphorylation of the CD18 tail, elevation of the intracellular Ca(2+) and lysis of the host cell (By similarity). This leukotoxin kills both BL-3 and pig leukocytes and is not hemolytic.</text>
</comment>
<comment type="subcellular location">
    <subcellularLocation>
        <location>Secreted</location>
    </subcellularLocation>
    <subcellularLocation>
        <location evidence="4">Host cell membrane</location>
        <topology evidence="4">Multi-pass membrane protein</topology>
    </subcellularLocation>
</comment>
<comment type="domain">
    <text evidence="1">The transmembrane domains are believed to be involved in pore formation in target cells.</text>
</comment>
<comment type="domain">
    <text evidence="1">The Gly-rich region is probably involved in calcium binding, which is required for target cell-binding and cytolytic activity.</text>
</comment>
<comment type="domain">
    <text evidence="1">The C-terminal domain contains an export signal that is recognized by the ABC transporter complex LktBD.</text>
</comment>
<comment type="PTM">
    <text evidence="1">Acylated by LktC. The toxin only becomes active when modified (By similarity).</text>
</comment>
<comment type="miscellaneous">
    <text>The lktCABD operon has a complex mosaic structure that has been derived by extensive inter- and intraspecies horizontal DNA transfer and intragenic recombination events.</text>
</comment>
<comment type="similarity">
    <text evidence="4">Belongs to the RTX prokaryotic toxin (TC 1.C.11) family.</text>
</comment>
<feature type="chain" id="PRO_0000196234" description="Leukotoxin">
    <location>
        <begin position="1"/>
        <end position="947"/>
    </location>
</feature>
<feature type="transmembrane region" description="Helical" evidence="2">
    <location>
        <begin position="137"/>
        <end position="157"/>
    </location>
</feature>
<feature type="transmembrane region" description="Helical" evidence="2">
    <location>
        <begin position="226"/>
        <end position="246"/>
    </location>
</feature>
<feature type="transmembrane region" description="Helical" evidence="2">
    <location>
        <begin position="293"/>
        <end position="313"/>
    </location>
</feature>
<feature type="transmembrane region" description="Helical" evidence="2">
    <location>
        <begin position="355"/>
        <end position="375"/>
    </location>
</feature>
<feature type="transmembrane region" description="Helical" evidence="2">
    <location>
        <begin position="377"/>
        <end position="397"/>
    </location>
</feature>
<feature type="repeat" description="Hemolysin-type calcium-binding 1">
    <location>
        <begin position="711"/>
        <end position="728"/>
    </location>
</feature>
<feature type="repeat" description="Hemolysin-type calcium-binding 2">
    <location>
        <begin position="729"/>
        <end position="746"/>
    </location>
</feature>
<feature type="repeat" description="Hemolysin-type calcium-binding 3">
    <location>
        <begin position="747"/>
        <end position="764"/>
    </location>
</feature>
<feature type="repeat" description="Hemolysin-type calcium-binding 4">
    <location>
        <begin position="765"/>
        <end position="782"/>
    </location>
</feature>
<feature type="repeat" description="Hemolysin-type calcium-binding 5">
    <location>
        <begin position="784"/>
        <end position="801"/>
    </location>
</feature>
<proteinExistence type="inferred from homology"/>
<protein>
    <recommendedName>
        <fullName>Leukotoxin</fullName>
    </recommendedName>
    <alternativeName>
        <fullName>PlLkt</fullName>
    </alternativeName>
</protein>
<keyword id="KW-0106">Calcium</keyword>
<keyword id="KW-0204">Cytolysis</keyword>
<keyword id="KW-1032">Host cell membrane</keyword>
<keyword id="KW-1043">Host membrane</keyword>
<keyword id="KW-0449">Lipoprotein</keyword>
<keyword id="KW-0472">Membrane</keyword>
<keyword id="KW-0677">Repeat</keyword>
<keyword id="KW-0964">Secreted</keyword>
<keyword id="KW-0800">Toxin</keyword>
<keyword id="KW-0812">Transmembrane</keyword>
<keyword id="KW-1133">Transmembrane helix</keyword>
<keyword id="KW-0843">Virulence</keyword>
<reference key="1">
    <citation type="journal article" date="1993" name="Infect. Immun.">
        <title>Molecular characterization of a leukotoxin gene from a Pasteurella haemolytica-like organism, encoding a new member of the RTX toxin family.</title>
        <authorList>
            <person name="Chang Y.-F."/>
            <person name="Ma D.-P."/>
            <person name="Shi J."/>
            <person name="Chengappa M.M."/>
        </authorList>
    </citation>
    <scope>NUCLEOTIDE SEQUENCE [GENOMIC DNA]</scope>
    <scope>FUNCTION</scope>
</reference>
<sequence length="947" mass="101560">MGKLANISTNLKNSLQSGLHKTGQSLNQAGQSLKAGAKKLILYIPKDYEYDSGRGNGLQDLVKAAEDLGIEVQREERNGIATAQNSLSTIQNILGFSERGVVLSAPQLDKLLQKYKISKAPGSSENVAKNLGNAQTLLSGIQSILGSVMAGMDLDEILKNKGSELDLAKAGLELTNSLIENIANSVQTLDTFSEQISQLGTKLQNVKGLGTLGDKLKNFSGFSKAGLGLEVISGLLSGATAALVLADKNASTDRKVGAGFELANQVVGNITKAVSSYILAQRVAAGLSNTGPVSALIASTVALAISPLAFAGIADKFNNAKALESYAERFKKLGYEGDSLLAEYQRGTGTIDASVTAVNTALAAISGGVSAAAAGSLVGAPIALLVSGITGIISTILQYSKQAMFEHVANKIHDKIVDWEKKHNGKNYFENGYDSRYLADLQDNMRQLQNLNKELQAERVIRITQQQWDNNIGNLAGISRLGEKVMSGKAYADAFEEGKLIKADTFVQLDSATGVINTSKSDNVKTQHILFRTPLLTPGVENRERIQTGKYEYITKLNINRVDSWKITDGATNSTFDLTNVVQRIGIELDHADNVTKTKETKIIANLGDGNDDVFIGSGTTEVDGGNGLDRVHYSRGDYGALTIDATNESVQGSYTVKRFVETGKALHEVTATQSVLVGSREEKIEYRHSNNTQHAGYYTTDTLKSVEEIIGTSRNDIFKGSKFDDAFHGGDGVDNIDGNAGNDRLFGGKGFDIIDGGDGDDFIDGGQGDDILHGGKGNDILCTVKGGNDSISDSGGNDRLSFADSNLKDLTFEKVNHHLMITNVKKEKVTIQNWFREADYAKTVHNYQATADEKIEEIIGRQGERITSKQIDELIEKGKGKIDQSELERIAESSALLKESKFASNSLNKLVSSAGAFASSNDNRVGLGVPTSLYEHTQSVQFVRAA</sequence>
<dbReference type="EMBL" id="L12148">
    <property type="protein sequence ID" value="AAA16444.1"/>
    <property type="molecule type" value="Genomic_DNA"/>
</dbReference>
<dbReference type="SMR" id="P55123"/>
<dbReference type="GO" id="GO:0005576">
    <property type="term" value="C:extracellular region"/>
    <property type="evidence" value="ECO:0007669"/>
    <property type="project" value="UniProtKB-SubCell"/>
</dbReference>
<dbReference type="GO" id="GO:0020002">
    <property type="term" value="C:host cell plasma membrane"/>
    <property type="evidence" value="ECO:0007669"/>
    <property type="project" value="UniProtKB-SubCell"/>
</dbReference>
<dbReference type="GO" id="GO:0016020">
    <property type="term" value="C:membrane"/>
    <property type="evidence" value="ECO:0007669"/>
    <property type="project" value="UniProtKB-KW"/>
</dbReference>
<dbReference type="GO" id="GO:0005509">
    <property type="term" value="F:calcium ion binding"/>
    <property type="evidence" value="ECO:0007669"/>
    <property type="project" value="InterPro"/>
</dbReference>
<dbReference type="GO" id="GO:0015267">
    <property type="term" value="F:channel activity"/>
    <property type="evidence" value="ECO:0007669"/>
    <property type="project" value="InterPro"/>
</dbReference>
<dbReference type="GO" id="GO:0090729">
    <property type="term" value="F:toxin activity"/>
    <property type="evidence" value="ECO:0007669"/>
    <property type="project" value="UniProtKB-KW"/>
</dbReference>
<dbReference type="GO" id="GO:0031640">
    <property type="term" value="P:killing of cells of another organism"/>
    <property type="evidence" value="ECO:0007669"/>
    <property type="project" value="UniProtKB-KW"/>
</dbReference>
<dbReference type="Gene3D" id="2.150.10.10">
    <property type="entry name" value="Serralysin-like metalloprotease, C-terminal"/>
    <property type="match status" value="1"/>
</dbReference>
<dbReference type="InterPro" id="IPR018511">
    <property type="entry name" value="Hemolysin-typ_Ca-bd_CS"/>
</dbReference>
<dbReference type="InterPro" id="IPR001343">
    <property type="entry name" value="Hemolysn_Ca-bd"/>
</dbReference>
<dbReference type="InterPro" id="IPR013550">
    <property type="entry name" value="RTX_C"/>
</dbReference>
<dbReference type="InterPro" id="IPR018504">
    <property type="entry name" value="RTX_pore_form"/>
</dbReference>
<dbReference type="InterPro" id="IPR050557">
    <property type="entry name" value="RTX_toxin/Mannuronan_C5-epim"/>
</dbReference>
<dbReference type="InterPro" id="IPR003995">
    <property type="entry name" value="RTX_toxin_determinant-A"/>
</dbReference>
<dbReference type="InterPro" id="IPR011049">
    <property type="entry name" value="Serralysin-like_metalloprot_C"/>
</dbReference>
<dbReference type="NCBIfam" id="NF033943">
    <property type="entry name" value="RTX_toxin"/>
    <property type="match status" value="1"/>
</dbReference>
<dbReference type="PANTHER" id="PTHR38340">
    <property type="entry name" value="S-LAYER PROTEIN"/>
    <property type="match status" value="1"/>
</dbReference>
<dbReference type="PANTHER" id="PTHR38340:SF1">
    <property type="entry name" value="S-LAYER PROTEIN"/>
    <property type="match status" value="1"/>
</dbReference>
<dbReference type="Pfam" id="PF00353">
    <property type="entry name" value="HemolysinCabind"/>
    <property type="match status" value="3"/>
</dbReference>
<dbReference type="Pfam" id="PF02382">
    <property type="entry name" value="RTX"/>
    <property type="match status" value="1"/>
</dbReference>
<dbReference type="Pfam" id="PF08339">
    <property type="entry name" value="RTX_C"/>
    <property type="match status" value="1"/>
</dbReference>
<dbReference type="PRINTS" id="PR00313">
    <property type="entry name" value="CABNDNGRPT"/>
</dbReference>
<dbReference type="PRINTS" id="PR01488">
    <property type="entry name" value="RTXTOXINA"/>
</dbReference>
<dbReference type="SUPFAM" id="SSF51120">
    <property type="entry name" value="beta-Roll"/>
    <property type="match status" value="1"/>
</dbReference>
<dbReference type="PROSITE" id="PS00330">
    <property type="entry name" value="HEMOLYSIN_CALCIUM"/>
    <property type="match status" value="4"/>
</dbReference>
<accession>P55123</accession>
<name>LKTA_PASSP</name>
<evidence type="ECO:0000250" key="1"/>
<evidence type="ECO:0000255" key="2"/>
<evidence type="ECO:0000269" key="3">
    <source>
    </source>
</evidence>
<evidence type="ECO:0000305" key="4"/>